<gene>
    <name type="primary">Cenpv</name>
    <name type="synonym">Prr6</name>
</gene>
<proteinExistence type="evidence at protein level"/>
<keyword id="KW-0025">Alternative splicing</keyword>
<keyword id="KW-0131">Cell cycle</keyword>
<keyword id="KW-0132">Cell division</keyword>
<keyword id="KW-0137">Centromere</keyword>
<keyword id="KW-0158">Chromosome</keyword>
<keyword id="KW-0963">Cytoplasm</keyword>
<keyword id="KW-0206">Cytoskeleton</keyword>
<keyword id="KW-0995">Kinetochore</keyword>
<keyword id="KW-0479">Metal-binding</keyword>
<keyword id="KW-0488">Methylation</keyword>
<keyword id="KW-0498">Mitosis</keyword>
<keyword id="KW-0539">Nucleus</keyword>
<keyword id="KW-0597">Phosphoprotein</keyword>
<keyword id="KW-1185">Reference proteome</keyword>
<keyword id="KW-0862">Zinc</keyword>
<name>CENPV_MOUSE</name>
<protein>
    <recommendedName>
        <fullName>Centromere protein V</fullName>
        <shortName>CENP-V</shortName>
    </recommendedName>
    <alternativeName>
        <fullName>Proline-rich protein 6</fullName>
    </alternativeName>
</protein>
<evidence type="ECO:0000250" key="1"/>
<evidence type="ECO:0000250" key="2">
    <source>
        <dbReference type="UniProtKB" id="Q7Z7K6"/>
    </source>
</evidence>
<evidence type="ECO:0000255" key="3">
    <source>
        <dbReference type="PROSITE-ProRule" id="PRU01239"/>
    </source>
</evidence>
<evidence type="ECO:0000256" key="4">
    <source>
        <dbReference type="SAM" id="MobiDB-lite"/>
    </source>
</evidence>
<evidence type="ECO:0000303" key="5">
    <source>
    </source>
</evidence>
<evidence type="ECO:0000305" key="6"/>
<evidence type="ECO:0007744" key="7">
    <source>
    </source>
</evidence>
<evidence type="ECO:0007744" key="8">
    <source>
    </source>
</evidence>
<accession>Q9CXS4</accession>
<accession>B2RWK8</accession>
<accession>B9EK22</accession>
<accession>Q5SX21</accession>
<accession>Q6PIA5</accession>
<sequence>MRRTRSAVATGPREQRRSGATGGLSGGESRAQRSRSRTRAGAGGGGGAVGPQPSAKPRPKPPPRAQEAAAEEPPPAVTPAASVSALDLGEQRERWETFQKRQRLSFEGAAKLLLDTFEYQGLVKHTGGCHCGAVRFEVWASADLHIFDCNCSICKKKQNRHFIVPASRFKLLKGAESITTYTFNTHKAQHTFCKRCGVQSFYTPRSNPGGFGIAPHCLDEGTVRSVVTEEFNGSDWERAMKEHKTIKNMSKE</sequence>
<dbReference type="EMBL" id="AK014046">
    <property type="protein sequence ID" value="BAB29130.1"/>
    <property type="molecule type" value="mRNA"/>
</dbReference>
<dbReference type="EMBL" id="AL596181">
    <property type="status" value="NOT_ANNOTATED_CDS"/>
    <property type="molecule type" value="Genomic_DNA"/>
</dbReference>
<dbReference type="EMBL" id="CH466601">
    <property type="protein sequence ID" value="EDL10349.1"/>
    <property type="molecule type" value="Genomic_DNA"/>
</dbReference>
<dbReference type="EMBL" id="BC038868">
    <property type="protein sequence ID" value="AAH38868.1"/>
    <property type="molecule type" value="mRNA"/>
</dbReference>
<dbReference type="EMBL" id="BC147794">
    <property type="protein sequence ID" value="AAI47795.1"/>
    <property type="molecule type" value="mRNA"/>
</dbReference>
<dbReference type="EMBL" id="BC147795">
    <property type="protein sequence ID" value="AAI47796.1"/>
    <property type="molecule type" value="mRNA"/>
</dbReference>
<dbReference type="EMBL" id="BC147835">
    <property type="protein sequence ID" value="AAI47836.1"/>
    <property type="molecule type" value="mRNA"/>
</dbReference>
<dbReference type="EMBL" id="BC147837">
    <property type="protein sequence ID" value="AAI47838.1"/>
    <property type="molecule type" value="mRNA"/>
</dbReference>
<dbReference type="CCDS" id="CCDS48818.1">
    <molecule id="Q9CXS4-1"/>
</dbReference>
<dbReference type="RefSeq" id="NP_082724.1">
    <molecule id="Q9CXS4-1"/>
    <property type="nucleotide sequence ID" value="NM_028448.1"/>
</dbReference>
<dbReference type="SMR" id="Q9CXS4"/>
<dbReference type="BioGRID" id="215794">
    <property type="interactions" value="5"/>
</dbReference>
<dbReference type="FunCoup" id="Q9CXS4">
    <property type="interactions" value="409"/>
</dbReference>
<dbReference type="IntAct" id="Q9CXS4">
    <property type="interactions" value="5"/>
</dbReference>
<dbReference type="MINT" id="Q9CXS4"/>
<dbReference type="STRING" id="10090.ENSMUSP00000018653"/>
<dbReference type="GlyGen" id="Q9CXS4">
    <property type="glycosylation" value="3 sites, 1 N-linked glycan (1 site), 1 O-linked glycan (1 site)"/>
</dbReference>
<dbReference type="iPTMnet" id="Q9CXS4"/>
<dbReference type="PhosphoSitePlus" id="Q9CXS4"/>
<dbReference type="SwissPalm" id="Q9CXS4"/>
<dbReference type="jPOST" id="Q9CXS4"/>
<dbReference type="PaxDb" id="10090-ENSMUSP00000018653"/>
<dbReference type="PeptideAtlas" id="Q9CXS4"/>
<dbReference type="ProteomicsDB" id="283883">
    <molecule id="Q9CXS4-1"/>
</dbReference>
<dbReference type="ProteomicsDB" id="283884">
    <molecule id="Q9CXS4-2"/>
</dbReference>
<dbReference type="Pumba" id="Q9CXS4"/>
<dbReference type="Antibodypedia" id="25303">
    <property type="antibodies" value="74 antibodies from 22 providers"/>
</dbReference>
<dbReference type="DNASU" id="73139"/>
<dbReference type="Ensembl" id="ENSMUST00000018653.8">
    <molecule id="Q9CXS4-1"/>
    <property type="protein sequence ID" value="ENSMUSP00000018653.2"/>
    <property type="gene ID" value="ENSMUSG00000018509.9"/>
</dbReference>
<dbReference type="GeneID" id="73139"/>
<dbReference type="KEGG" id="mmu:73139"/>
<dbReference type="UCSC" id="uc007jjf.2">
    <molecule id="Q9CXS4-1"/>
    <property type="organism name" value="mouse"/>
</dbReference>
<dbReference type="AGR" id="MGI:1920389"/>
<dbReference type="CTD" id="201161"/>
<dbReference type="MGI" id="MGI:1920389">
    <property type="gene designation" value="Cenpv"/>
</dbReference>
<dbReference type="VEuPathDB" id="HostDB:ENSMUSG00000018509"/>
<dbReference type="eggNOG" id="KOG4192">
    <property type="taxonomic scope" value="Eukaryota"/>
</dbReference>
<dbReference type="GeneTree" id="ENSGT00390000003183"/>
<dbReference type="HOGENOM" id="CLU_087799_1_0_1"/>
<dbReference type="InParanoid" id="Q9CXS4"/>
<dbReference type="OMA" id="FNGNEWE"/>
<dbReference type="OrthoDB" id="2993351at2759"/>
<dbReference type="PhylomeDB" id="Q9CXS4"/>
<dbReference type="TreeFam" id="TF313636"/>
<dbReference type="BioGRID-ORCS" id="73139">
    <property type="hits" value="4 hits in 79 CRISPR screens"/>
</dbReference>
<dbReference type="CD-CODE" id="DE1E139C">
    <property type="entry name" value="Chromatoid body"/>
</dbReference>
<dbReference type="ChiTaRS" id="Cenpv">
    <property type="organism name" value="mouse"/>
</dbReference>
<dbReference type="PRO" id="PR:Q9CXS4"/>
<dbReference type="Proteomes" id="UP000000589">
    <property type="component" value="Chromosome 11"/>
</dbReference>
<dbReference type="RNAct" id="Q9CXS4">
    <property type="molecule type" value="protein"/>
</dbReference>
<dbReference type="Bgee" id="ENSMUSG00000018509">
    <property type="expression patterns" value="Expressed in spermatocyte and 252 other cell types or tissues"/>
</dbReference>
<dbReference type="ExpressionAtlas" id="Q9CXS4">
    <property type="expression patterns" value="baseline and differential"/>
</dbReference>
<dbReference type="GO" id="GO:0005829">
    <property type="term" value="C:cytosol"/>
    <property type="evidence" value="ECO:0007669"/>
    <property type="project" value="Ensembl"/>
</dbReference>
<dbReference type="GO" id="GO:0000776">
    <property type="term" value="C:kinetochore"/>
    <property type="evidence" value="ECO:0000250"/>
    <property type="project" value="UniProtKB"/>
</dbReference>
<dbReference type="GO" id="GO:0015630">
    <property type="term" value="C:microtubule cytoskeleton"/>
    <property type="evidence" value="ECO:0000266"/>
    <property type="project" value="MGI"/>
</dbReference>
<dbReference type="GO" id="GO:0030496">
    <property type="term" value="C:midbody"/>
    <property type="evidence" value="ECO:0007669"/>
    <property type="project" value="Ensembl"/>
</dbReference>
<dbReference type="GO" id="GO:0031965">
    <property type="term" value="C:nuclear membrane"/>
    <property type="evidence" value="ECO:0007669"/>
    <property type="project" value="Ensembl"/>
</dbReference>
<dbReference type="GO" id="GO:0005654">
    <property type="term" value="C:nucleoplasm"/>
    <property type="evidence" value="ECO:0007669"/>
    <property type="project" value="Ensembl"/>
</dbReference>
<dbReference type="GO" id="GO:0005634">
    <property type="term" value="C:nucleus"/>
    <property type="evidence" value="ECO:0000250"/>
    <property type="project" value="UniProtKB"/>
</dbReference>
<dbReference type="GO" id="GO:0051233">
    <property type="term" value="C:spindle midzone"/>
    <property type="evidence" value="ECO:0000250"/>
    <property type="project" value="UniProtKB"/>
</dbReference>
<dbReference type="GO" id="GO:0016846">
    <property type="term" value="F:carbon-sulfur lyase activity"/>
    <property type="evidence" value="ECO:0007669"/>
    <property type="project" value="InterPro"/>
</dbReference>
<dbReference type="GO" id="GO:0046872">
    <property type="term" value="F:metal ion binding"/>
    <property type="evidence" value="ECO:0007669"/>
    <property type="project" value="UniProtKB-KW"/>
</dbReference>
<dbReference type="GO" id="GO:0001667">
    <property type="term" value="P:ameboidal-type cell migration"/>
    <property type="evidence" value="ECO:0000266"/>
    <property type="project" value="MGI"/>
</dbReference>
<dbReference type="GO" id="GO:0051301">
    <property type="term" value="P:cell division"/>
    <property type="evidence" value="ECO:0007669"/>
    <property type="project" value="UniProtKB-KW"/>
</dbReference>
<dbReference type="GO" id="GO:0034508">
    <property type="term" value="P:centromere complex assembly"/>
    <property type="evidence" value="ECO:0000250"/>
    <property type="project" value="UniProtKB"/>
</dbReference>
<dbReference type="GO" id="GO:0031508">
    <property type="term" value="P:pericentric heterochromatin formation"/>
    <property type="evidence" value="ECO:0000250"/>
    <property type="project" value="UniProtKB"/>
</dbReference>
<dbReference type="GO" id="GO:0032467">
    <property type="term" value="P:positive regulation of cytokinesis"/>
    <property type="evidence" value="ECO:0000250"/>
    <property type="project" value="UniProtKB"/>
</dbReference>
<dbReference type="GO" id="GO:0033044">
    <property type="term" value="P:regulation of chromosome organization"/>
    <property type="evidence" value="ECO:0000250"/>
    <property type="project" value="UniProtKB"/>
</dbReference>
<dbReference type="FunFam" id="2.170.150.70:FF:000001">
    <property type="entry name" value="Centromere protein V"/>
    <property type="match status" value="1"/>
</dbReference>
<dbReference type="Gene3D" id="2.170.150.70">
    <property type="match status" value="1"/>
</dbReference>
<dbReference type="InterPro" id="IPR052355">
    <property type="entry name" value="CENP-V-like"/>
</dbReference>
<dbReference type="InterPro" id="IPR006913">
    <property type="entry name" value="CENP-V/GFA"/>
</dbReference>
<dbReference type="InterPro" id="IPR011057">
    <property type="entry name" value="Mss4-like_sf"/>
</dbReference>
<dbReference type="PANTHER" id="PTHR28620">
    <property type="entry name" value="CENTROMERE PROTEIN V"/>
    <property type="match status" value="1"/>
</dbReference>
<dbReference type="PANTHER" id="PTHR28620:SF4">
    <property type="entry name" value="CENTROMERE PROTEIN V"/>
    <property type="match status" value="1"/>
</dbReference>
<dbReference type="Pfam" id="PF04828">
    <property type="entry name" value="GFA"/>
    <property type="match status" value="1"/>
</dbReference>
<dbReference type="SUPFAM" id="SSF51316">
    <property type="entry name" value="Mss4-like"/>
    <property type="match status" value="1"/>
</dbReference>
<dbReference type="PROSITE" id="PS51891">
    <property type="entry name" value="CENP_V_GFA"/>
    <property type="match status" value="1"/>
</dbReference>
<feature type="chain" id="PRO_0000244360" description="Centromere protein V">
    <location>
        <begin position="1"/>
        <end position="252"/>
    </location>
</feature>
<feature type="domain" description="CENP-V/GFA" evidence="3">
    <location>
        <begin position="125"/>
        <end position="237"/>
    </location>
</feature>
<feature type="region of interest" description="Disordered" evidence="4">
    <location>
        <begin position="1"/>
        <end position="80"/>
    </location>
</feature>
<feature type="compositionally biased region" description="Pro residues" evidence="4">
    <location>
        <begin position="54"/>
        <end position="64"/>
    </location>
</feature>
<feature type="binding site" evidence="3">
    <location>
        <position position="129"/>
    </location>
    <ligand>
        <name>Zn(2+)</name>
        <dbReference type="ChEBI" id="CHEBI:29105"/>
        <label>1</label>
        <note>structural</note>
    </ligand>
</feature>
<feature type="binding site" evidence="3">
    <location>
        <position position="131"/>
    </location>
    <ligand>
        <name>Zn(2+)</name>
        <dbReference type="ChEBI" id="CHEBI:29105"/>
        <label>1</label>
        <note>structural</note>
    </ligand>
</feature>
<feature type="binding site" evidence="3">
    <location>
        <position position="149"/>
    </location>
    <ligand>
        <name>Zn(2+)</name>
        <dbReference type="ChEBI" id="CHEBI:29105"/>
        <label>2</label>
        <note>catalytic</note>
    </ligand>
</feature>
<feature type="binding site" evidence="3">
    <location>
        <position position="151"/>
    </location>
    <ligand>
        <name>Zn(2+)</name>
        <dbReference type="ChEBI" id="CHEBI:29105"/>
        <label>2</label>
        <note>catalytic</note>
    </ligand>
</feature>
<feature type="binding site" evidence="3">
    <location>
        <position position="154"/>
    </location>
    <ligand>
        <name>Zn(2+)</name>
        <dbReference type="ChEBI" id="CHEBI:29105"/>
        <label>2</label>
        <note>catalytic</note>
    </ligand>
</feature>
<feature type="binding site" evidence="3">
    <location>
        <position position="193"/>
    </location>
    <ligand>
        <name>Zn(2+)</name>
        <dbReference type="ChEBI" id="CHEBI:29105"/>
        <label>1</label>
        <note>structural</note>
    </ligand>
</feature>
<feature type="binding site" evidence="3">
    <location>
        <position position="196"/>
    </location>
    <ligand>
        <name>Zn(2+)</name>
        <dbReference type="ChEBI" id="CHEBI:29105"/>
        <label>1</label>
        <note>structural</note>
    </ligand>
</feature>
<feature type="modified residue" description="Phosphoserine" evidence="7">
    <location>
        <position position="18"/>
    </location>
</feature>
<feature type="modified residue" description="Omega-N-methylarginine" evidence="8">
    <location>
        <position position="39"/>
    </location>
</feature>
<feature type="modified residue" description="Phosphothreonine" evidence="2">
    <location>
        <position position="78"/>
    </location>
</feature>
<feature type="modified residue" description="Phosphoserine" evidence="7">
    <location>
        <position position="234"/>
    </location>
</feature>
<feature type="splice variant" id="VSP_019551" description="In isoform 2." evidence="5">
    <original>MRRTRSAVATGPREQRRSGATGGLSGGESRAQRSRSRTRAGAGGGGGAVGPQPSAKPRPKPPPRAQEAAAEEPPPAVTPAASVSALDLGEQRERWETFQKRQRLSFEGAAKLLLDTFEYQGLVKHTGGCHCGAVRFEVWASADLHIFDCNCSICKKKQNRHFIVPASRFKLLK</original>
    <variation>MINVYLSLFSQ</variation>
    <location>
        <begin position="1"/>
        <end position="173"/>
    </location>
</feature>
<feature type="sequence conflict" description="In Ref. 1; BAB29130 and 4; AAH38868." evidence="6" ref="1 4">
    <original>R</original>
    <variation>P</variation>
    <location>
        <position position="30"/>
    </location>
</feature>
<comment type="function">
    <text evidence="1">Required for distribution of pericentromeric heterochromatin in interphase nuclei and for centromere formation and organization, chromosome alignment and cytokinesis.</text>
</comment>
<comment type="cofactor">
    <cofactor evidence="3">
        <name>Zn(2+)</name>
        <dbReference type="ChEBI" id="CHEBI:29105"/>
    </cofactor>
    <text evidence="3">Binds 2 Zn(2+) ions per subunit.</text>
</comment>
<comment type="subcellular location">
    <subcellularLocation>
        <location evidence="2">Chromosome</location>
        <location evidence="2">Centromere</location>
        <location evidence="2">Kinetochore</location>
    </subcellularLocation>
    <subcellularLocation>
        <location evidence="2">Nucleus</location>
    </subcellularLocation>
    <subcellularLocation>
        <location evidence="2">Cytoplasm</location>
        <location evidence="2">Cytoskeleton</location>
        <location evidence="2">Spindle</location>
    </subcellularLocation>
    <text evidence="2">Enriched at the nuclear periphery and around the nucleolus. In mitotic cells, localizes to kinetochores from prometaphase to metaphase. At anaphase onset, transfers to the spindle midzone and then to the mid-body in telophase and cytokinesis.</text>
</comment>
<comment type="alternative products">
    <event type="alternative splicing"/>
    <isoform>
        <id>Q9CXS4-1</id>
        <name>1</name>
        <sequence type="displayed"/>
    </isoform>
    <isoform>
        <id>Q9CXS4-2</id>
        <name>2</name>
        <sequence type="described" ref="VSP_019551"/>
    </isoform>
</comment>
<comment type="similarity">
    <text evidence="6">Belongs to the Gfa family.</text>
</comment>
<reference key="1">
    <citation type="journal article" date="2005" name="Science">
        <title>The transcriptional landscape of the mammalian genome.</title>
        <authorList>
            <person name="Carninci P."/>
            <person name="Kasukawa T."/>
            <person name="Katayama S."/>
            <person name="Gough J."/>
            <person name="Frith M.C."/>
            <person name="Maeda N."/>
            <person name="Oyama R."/>
            <person name="Ravasi T."/>
            <person name="Lenhard B."/>
            <person name="Wells C."/>
            <person name="Kodzius R."/>
            <person name="Shimokawa K."/>
            <person name="Bajic V.B."/>
            <person name="Brenner S.E."/>
            <person name="Batalov S."/>
            <person name="Forrest A.R."/>
            <person name="Zavolan M."/>
            <person name="Davis M.J."/>
            <person name="Wilming L.G."/>
            <person name="Aidinis V."/>
            <person name="Allen J.E."/>
            <person name="Ambesi-Impiombato A."/>
            <person name="Apweiler R."/>
            <person name="Aturaliya R.N."/>
            <person name="Bailey T.L."/>
            <person name="Bansal M."/>
            <person name="Baxter L."/>
            <person name="Beisel K.W."/>
            <person name="Bersano T."/>
            <person name="Bono H."/>
            <person name="Chalk A.M."/>
            <person name="Chiu K.P."/>
            <person name="Choudhary V."/>
            <person name="Christoffels A."/>
            <person name="Clutterbuck D.R."/>
            <person name="Crowe M.L."/>
            <person name="Dalla E."/>
            <person name="Dalrymple B.P."/>
            <person name="de Bono B."/>
            <person name="Della Gatta G."/>
            <person name="di Bernardo D."/>
            <person name="Down T."/>
            <person name="Engstrom P."/>
            <person name="Fagiolini M."/>
            <person name="Faulkner G."/>
            <person name="Fletcher C.F."/>
            <person name="Fukushima T."/>
            <person name="Furuno M."/>
            <person name="Futaki S."/>
            <person name="Gariboldi M."/>
            <person name="Georgii-Hemming P."/>
            <person name="Gingeras T.R."/>
            <person name="Gojobori T."/>
            <person name="Green R.E."/>
            <person name="Gustincich S."/>
            <person name="Harbers M."/>
            <person name="Hayashi Y."/>
            <person name="Hensch T.K."/>
            <person name="Hirokawa N."/>
            <person name="Hill D."/>
            <person name="Huminiecki L."/>
            <person name="Iacono M."/>
            <person name="Ikeo K."/>
            <person name="Iwama A."/>
            <person name="Ishikawa T."/>
            <person name="Jakt M."/>
            <person name="Kanapin A."/>
            <person name="Katoh M."/>
            <person name="Kawasawa Y."/>
            <person name="Kelso J."/>
            <person name="Kitamura H."/>
            <person name="Kitano H."/>
            <person name="Kollias G."/>
            <person name="Krishnan S.P."/>
            <person name="Kruger A."/>
            <person name="Kummerfeld S.K."/>
            <person name="Kurochkin I.V."/>
            <person name="Lareau L.F."/>
            <person name="Lazarevic D."/>
            <person name="Lipovich L."/>
            <person name="Liu J."/>
            <person name="Liuni S."/>
            <person name="McWilliam S."/>
            <person name="Madan Babu M."/>
            <person name="Madera M."/>
            <person name="Marchionni L."/>
            <person name="Matsuda H."/>
            <person name="Matsuzawa S."/>
            <person name="Miki H."/>
            <person name="Mignone F."/>
            <person name="Miyake S."/>
            <person name="Morris K."/>
            <person name="Mottagui-Tabar S."/>
            <person name="Mulder N."/>
            <person name="Nakano N."/>
            <person name="Nakauchi H."/>
            <person name="Ng P."/>
            <person name="Nilsson R."/>
            <person name="Nishiguchi S."/>
            <person name="Nishikawa S."/>
            <person name="Nori F."/>
            <person name="Ohara O."/>
            <person name="Okazaki Y."/>
            <person name="Orlando V."/>
            <person name="Pang K.C."/>
            <person name="Pavan W.J."/>
            <person name="Pavesi G."/>
            <person name="Pesole G."/>
            <person name="Petrovsky N."/>
            <person name="Piazza S."/>
            <person name="Reed J."/>
            <person name="Reid J.F."/>
            <person name="Ring B.Z."/>
            <person name="Ringwald M."/>
            <person name="Rost B."/>
            <person name="Ruan Y."/>
            <person name="Salzberg S.L."/>
            <person name="Sandelin A."/>
            <person name="Schneider C."/>
            <person name="Schoenbach C."/>
            <person name="Sekiguchi K."/>
            <person name="Semple C.A."/>
            <person name="Seno S."/>
            <person name="Sessa L."/>
            <person name="Sheng Y."/>
            <person name="Shibata Y."/>
            <person name="Shimada H."/>
            <person name="Shimada K."/>
            <person name="Silva D."/>
            <person name="Sinclair B."/>
            <person name="Sperling S."/>
            <person name="Stupka E."/>
            <person name="Sugiura K."/>
            <person name="Sultana R."/>
            <person name="Takenaka Y."/>
            <person name="Taki K."/>
            <person name="Tammoja K."/>
            <person name="Tan S.L."/>
            <person name="Tang S."/>
            <person name="Taylor M.S."/>
            <person name="Tegner J."/>
            <person name="Teichmann S.A."/>
            <person name="Ueda H.R."/>
            <person name="van Nimwegen E."/>
            <person name="Verardo R."/>
            <person name="Wei C.L."/>
            <person name="Yagi K."/>
            <person name="Yamanishi H."/>
            <person name="Zabarovsky E."/>
            <person name="Zhu S."/>
            <person name="Zimmer A."/>
            <person name="Hide W."/>
            <person name="Bult C."/>
            <person name="Grimmond S.M."/>
            <person name="Teasdale R.D."/>
            <person name="Liu E.T."/>
            <person name="Brusic V."/>
            <person name="Quackenbush J."/>
            <person name="Wahlestedt C."/>
            <person name="Mattick J.S."/>
            <person name="Hume D.A."/>
            <person name="Kai C."/>
            <person name="Sasaki D."/>
            <person name="Tomaru Y."/>
            <person name="Fukuda S."/>
            <person name="Kanamori-Katayama M."/>
            <person name="Suzuki M."/>
            <person name="Aoki J."/>
            <person name="Arakawa T."/>
            <person name="Iida J."/>
            <person name="Imamura K."/>
            <person name="Itoh M."/>
            <person name="Kato T."/>
            <person name="Kawaji H."/>
            <person name="Kawagashira N."/>
            <person name="Kawashima T."/>
            <person name="Kojima M."/>
            <person name="Kondo S."/>
            <person name="Konno H."/>
            <person name="Nakano K."/>
            <person name="Ninomiya N."/>
            <person name="Nishio T."/>
            <person name="Okada M."/>
            <person name="Plessy C."/>
            <person name="Shibata K."/>
            <person name="Shiraki T."/>
            <person name="Suzuki S."/>
            <person name="Tagami M."/>
            <person name="Waki K."/>
            <person name="Watahiki A."/>
            <person name="Okamura-Oho Y."/>
            <person name="Suzuki H."/>
            <person name="Kawai J."/>
            <person name="Hayashizaki Y."/>
        </authorList>
    </citation>
    <scope>NUCLEOTIDE SEQUENCE [LARGE SCALE MRNA] (ISOFORM 1)</scope>
    <source>
        <strain>C57BL/6J</strain>
        <tissue>Head</tissue>
    </source>
</reference>
<reference key="2">
    <citation type="journal article" date="2009" name="PLoS Biol.">
        <title>Lineage-specific biology revealed by a finished genome assembly of the mouse.</title>
        <authorList>
            <person name="Church D.M."/>
            <person name="Goodstadt L."/>
            <person name="Hillier L.W."/>
            <person name="Zody M.C."/>
            <person name="Goldstein S."/>
            <person name="She X."/>
            <person name="Bult C.J."/>
            <person name="Agarwala R."/>
            <person name="Cherry J.L."/>
            <person name="DiCuccio M."/>
            <person name="Hlavina W."/>
            <person name="Kapustin Y."/>
            <person name="Meric P."/>
            <person name="Maglott D."/>
            <person name="Birtle Z."/>
            <person name="Marques A.C."/>
            <person name="Graves T."/>
            <person name="Zhou S."/>
            <person name="Teague B."/>
            <person name="Potamousis K."/>
            <person name="Churas C."/>
            <person name="Place M."/>
            <person name="Herschleb J."/>
            <person name="Runnheim R."/>
            <person name="Forrest D."/>
            <person name="Amos-Landgraf J."/>
            <person name="Schwartz D.C."/>
            <person name="Cheng Z."/>
            <person name="Lindblad-Toh K."/>
            <person name="Eichler E.E."/>
            <person name="Ponting C.P."/>
        </authorList>
    </citation>
    <scope>NUCLEOTIDE SEQUENCE [LARGE SCALE GENOMIC DNA]</scope>
    <source>
        <strain>C57BL/6J</strain>
    </source>
</reference>
<reference key="3">
    <citation type="submission" date="2005-07" db="EMBL/GenBank/DDBJ databases">
        <authorList>
            <person name="Mural R.J."/>
            <person name="Adams M.D."/>
            <person name="Myers E.W."/>
            <person name="Smith H.O."/>
            <person name="Venter J.C."/>
        </authorList>
    </citation>
    <scope>NUCLEOTIDE SEQUENCE [LARGE SCALE GENOMIC DNA]</scope>
</reference>
<reference key="4">
    <citation type="journal article" date="2004" name="Genome Res.">
        <title>The status, quality, and expansion of the NIH full-length cDNA project: the Mammalian Gene Collection (MGC).</title>
        <authorList>
            <consortium name="The MGC Project Team"/>
        </authorList>
    </citation>
    <scope>NUCLEOTIDE SEQUENCE [LARGE SCALE MRNA] (ISOFORMS 1 AND 2)</scope>
    <source>
        <strain>C57BL/6J</strain>
        <tissue>Brain</tissue>
        <tissue>Mammary gland</tissue>
    </source>
</reference>
<reference key="5">
    <citation type="journal article" date="2010" name="Cell">
        <title>A tissue-specific atlas of mouse protein phosphorylation and expression.</title>
        <authorList>
            <person name="Huttlin E.L."/>
            <person name="Jedrychowski M.P."/>
            <person name="Elias J.E."/>
            <person name="Goswami T."/>
            <person name="Rad R."/>
            <person name="Beausoleil S.A."/>
            <person name="Villen J."/>
            <person name="Haas W."/>
            <person name="Sowa M.E."/>
            <person name="Gygi S.P."/>
        </authorList>
    </citation>
    <scope>PHOSPHORYLATION [LARGE SCALE ANALYSIS] AT SER-18 AND SER-234</scope>
    <scope>IDENTIFICATION BY MASS SPECTROMETRY [LARGE SCALE ANALYSIS]</scope>
    <source>
        <tissue>Brown adipose tissue</tissue>
        <tissue>Kidney</tissue>
        <tissue>Liver</tissue>
        <tissue>Lung</tissue>
        <tissue>Spleen</tissue>
        <tissue>Testis</tissue>
    </source>
</reference>
<reference key="6">
    <citation type="journal article" date="2014" name="Mol. Cell. Proteomics">
        <title>Immunoaffinity enrichment and mass spectrometry analysis of protein methylation.</title>
        <authorList>
            <person name="Guo A."/>
            <person name="Gu H."/>
            <person name="Zhou J."/>
            <person name="Mulhern D."/>
            <person name="Wang Y."/>
            <person name="Lee K.A."/>
            <person name="Yang V."/>
            <person name="Aguiar M."/>
            <person name="Kornhauser J."/>
            <person name="Jia X."/>
            <person name="Ren J."/>
            <person name="Beausoleil S.A."/>
            <person name="Silva J.C."/>
            <person name="Vemulapalli V."/>
            <person name="Bedford M.T."/>
            <person name="Comb M.J."/>
        </authorList>
    </citation>
    <scope>METHYLATION [LARGE SCALE ANALYSIS] AT ARG-39</scope>
    <scope>IDENTIFICATION BY MASS SPECTROMETRY [LARGE SCALE ANALYSIS]</scope>
    <source>
        <tissue>Brain</tissue>
    </source>
</reference>
<organism>
    <name type="scientific">Mus musculus</name>
    <name type="common">Mouse</name>
    <dbReference type="NCBI Taxonomy" id="10090"/>
    <lineage>
        <taxon>Eukaryota</taxon>
        <taxon>Metazoa</taxon>
        <taxon>Chordata</taxon>
        <taxon>Craniata</taxon>
        <taxon>Vertebrata</taxon>
        <taxon>Euteleostomi</taxon>
        <taxon>Mammalia</taxon>
        <taxon>Eutheria</taxon>
        <taxon>Euarchontoglires</taxon>
        <taxon>Glires</taxon>
        <taxon>Rodentia</taxon>
        <taxon>Myomorpha</taxon>
        <taxon>Muroidea</taxon>
        <taxon>Muridae</taxon>
        <taxon>Murinae</taxon>
        <taxon>Mus</taxon>
        <taxon>Mus</taxon>
    </lineage>
</organism>